<reference evidence="8 9" key="1">
    <citation type="journal article" date="1999" name="DNA Cell Biol.">
        <title>A class of neuroD-related basic helix-loop-helix transcription factors expressed in developing central nervous system in zebrafish.</title>
        <authorList>
            <person name="Liao J."/>
            <person name="He J."/>
            <person name="Yan T."/>
            <person name="Korzh V."/>
            <person name="Gong Z."/>
        </authorList>
    </citation>
    <scope>NUCLEOTIDE SEQUENCE [MRNA]</scope>
    <scope>DEVELOPMENTAL STAGE</scope>
    <scope>TISSUE SPECIFICITY</scope>
    <source>
        <tissue evidence="6">Embryo</tissue>
    </source>
</reference>
<reference evidence="10" key="2">
    <citation type="submission" date="2004-02" db="EMBL/GenBank/DDBJ databases">
        <authorList>
            <consortium name="NIH - Zebrafish Gene Collection (ZGC) project"/>
        </authorList>
    </citation>
    <scope>NUCLEOTIDE SEQUENCE [LARGE SCALE MRNA]</scope>
    <source>
        <tissue evidence="10">Embryo</tissue>
    </source>
</reference>
<reference evidence="8" key="3">
    <citation type="journal article" date="2002" name="FEBS Lett.">
        <title>The functional specificity of NeuroD is defined by a single amino acid residue (N11) in the basic domain.</title>
        <authorList>
            <person name="Wang X."/>
            <person name="Korzh V."/>
            <person name="Gong Z."/>
        </authorList>
    </citation>
    <scope>FUNCTION</scope>
</reference>
<proteinExistence type="evidence at transcript level"/>
<name>NDF6A_DANRE</name>
<feature type="chain" id="PRO_0000274815" description="Neurogenic differentiation factor 6-A">
    <location>
        <begin position="1"/>
        <end position="327"/>
    </location>
</feature>
<feature type="domain" description="bHLH" evidence="4">
    <location>
        <begin position="88"/>
        <end position="140"/>
    </location>
</feature>
<feature type="region of interest" description="Disordered" evidence="5">
    <location>
        <begin position="17"/>
        <end position="85"/>
    </location>
</feature>
<feature type="short sequence motif" description="Nuclear localization signal" evidence="3">
    <location>
        <begin position="74"/>
        <end position="80"/>
    </location>
</feature>
<feature type="compositionally biased region" description="Basic and acidic residues" evidence="5">
    <location>
        <begin position="24"/>
        <end position="46"/>
    </location>
</feature>
<feature type="compositionally biased region" description="Acidic residues" evidence="5">
    <location>
        <begin position="47"/>
        <end position="63"/>
    </location>
</feature>
<feature type="compositionally biased region" description="Basic residues" evidence="5">
    <location>
        <begin position="68"/>
        <end position="80"/>
    </location>
</feature>
<feature type="sequence conflict" description="In Ref. 1; AAD23441." evidence="8" ref="1">
    <original>S</original>
    <variation>T</variation>
    <location>
        <position position="247"/>
    </location>
</feature>
<feature type="sequence conflict" description="In Ref. 1; AAD23441." evidence="8" ref="1">
    <original>CAVPPRASIGQSAR</original>
    <variation>WRSAAFHRPEPA</variation>
    <location>
        <begin position="285"/>
        <end position="298"/>
    </location>
</feature>
<gene>
    <name evidence="2" type="primary">neurod6a</name>
    <name evidence="11" type="synonym">atoh2a</name>
    <name evidence="9" type="synonym">ndr1a</name>
</gene>
<keyword id="KW-0010">Activator</keyword>
<keyword id="KW-0217">Developmental protein</keyword>
<keyword id="KW-0221">Differentiation</keyword>
<keyword id="KW-0238">DNA-binding</keyword>
<keyword id="KW-0524">Neurogenesis</keyword>
<keyword id="KW-0539">Nucleus</keyword>
<keyword id="KW-1185">Reference proteome</keyword>
<keyword id="KW-0804">Transcription</keyword>
<keyword id="KW-0805">Transcription regulation</keyword>
<protein>
    <recommendedName>
        <fullName>Neurogenic differentiation factor 6-A</fullName>
        <shortName>NeuroD6-A</shortName>
    </recommendedName>
    <alternativeName>
        <fullName>Protein atonal homolog 2-A</fullName>
    </alternativeName>
</protein>
<comment type="function">
    <text evidence="7">Differentiation factor required for neurogenesis. Acts as an upstream activator of isl1.</text>
</comment>
<comment type="subunit">
    <text evidence="1">Efficient DNA binding requires dimerization with another bHLH protein.</text>
</comment>
<comment type="subcellular location">
    <subcellularLocation>
        <location evidence="8">Nucleus</location>
    </subcellularLocation>
</comment>
<comment type="tissue specificity">
    <text evidence="6">Embryonic olfactory bulbs. In adult, expressed in brain, eye, intestine, muscle, ovary and skin.</text>
</comment>
<comment type="developmental stage">
    <text evidence="6">Embryonic, larval and adult stages. First detected at 22 hours post-fertilization (hpf).</text>
</comment>
<sequence>MLTLPFEDPVIMDTQFGANFPRDCVGDLKGNKQEPFEKEETLSHVMDDDDSEKDEDEREDGQDENGLPRRRGPRKKKMTKARVDRVKVRRMEANARERNRMHGLNNALDSLRKVVPCYSKTQKLSKIETLRLAKNYIWALSEILSTGKRPDLLTFVQTLCKGLSQPTTNLVAGCLQLNARNFIPDQISGEASFSGRSPYESVYSTYHSPSVVTPSGPSVDAVKPFRSFNYCSSYESFYESVSPECGSPQFEGPLSPPINFNGIFSLKHEEPVEYGKSCHYGTRYCAVPPRASIGQSARGSSDLHFPYDIHLRGQFYPVQDELNTFHN</sequence>
<accession>Q6NYU3</accession>
<accession>Q9W6C6</accession>
<evidence type="ECO:0000250" key="1">
    <source>
        <dbReference type="UniProtKB" id="P48986"/>
    </source>
</evidence>
<evidence type="ECO:0000250" key="2">
    <source>
        <dbReference type="UniProtKB" id="Q96NK8"/>
    </source>
</evidence>
<evidence type="ECO:0000255" key="3"/>
<evidence type="ECO:0000255" key="4">
    <source>
        <dbReference type="PROSITE-ProRule" id="PRU00981"/>
    </source>
</evidence>
<evidence type="ECO:0000256" key="5">
    <source>
        <dbReference type="SAM" id="MobiDB-lite"/>
    </source>
</evidence>
<evidence type="ECO:0000269" key="6">
    <source>
    </source>
</evidence>
<evidence type="ECO:0000269" key="7">
    <source>
    </source>
</evidence>
<evidence type="ECO:0000305" key="8"/>
<evidence type="ECO:0000312" key="9">
    <source>
        <dbReference type="EMBL" id="AAD23441.1"/>
    </source>
</evidence>
<evidence type="ECO:0000312" key="10">
    <source>
        <dbReference type="EMBL" id="AAH66459.1"/>
    </source>
</evidence>
<evidence type="ECO:0000312" key="11">
    <source>
        <dbReference type="ZFIN" id="ZDB-GENE-010608-1"/>
    </source>
</evidence>
<organism>
    <name type="scientific">Danio rerio</name>
    <name type="common">Zebrafish</name>
    <name type="synonym">Brachydanio rerio</name>
    <dbReference type="NCBI Taxonomy" id="7955"/>
    <lineage>
        <taxon>Eukaryota</taxon>
        <taxon>Metazoa</taxon>
        <taxon>Chordata</taxon>
        <taxon>Craniata</taxon>
        <taxon>Vertebrata</taxon>
        <taxon>Euteleostomi</taxon>
        <taxon>Actinopterygii</taxon>
        <taxon>Neopterygii</taxon>
        <taxon>Teleostei</taxon>
        <taxon>Ostariophysi</taxon>
        <taxon>Cypriniformes</taxon>
        <taxon>Danionidae</taxon>
        <taxon>Danioninae</taxon>
        <taxon>Danio</taxon>
    </lineage>
</organism>
<dbReference type="EMBL" id="AF115772">
    <property type="protein sequence ID" value="AAD23441.1"/>
    <property type="molecule type" value="mRNA"/>
</dbReference>
<dbReference type="EMBL" id="BC066459">
    <property type="protein sequence ID" value="AAH66459.1"/>
    <property type="molecule type" value="mRNA"/>
</dbReference>
<dbReference type="RefSeq" id="NP_571891.3">
    <property type="nucleotide sequence ID" value="NM_131816.3"/>
</dbReference>
<dbReference type="SMR" id="Q6NYU3"/>
<dbReference type="STRING" id="7955.ENSDARP00000096474"/>
<dbReference type="PaxDb" id="7955-ENSDARP00000089629"/>
<dbReference type="Ensembl" id="ENSDART00000058530">
    <property type="protein sequence ID" value="ENSDARP00000096474"/>
    <property type="gene ID" value="ENSDARG00000040008"/>
</dbReference>
<dbReference type="Ensembl" id="ENSDART00000098859">
    <property type="protein sequence ID" value="ENSDARP00000089629"/>
    <property type="gene ID" value="ENSDARG00000040008"/>
</dbReference>
<dbReference type="GeneID" id="114414"/>
<dbReference type="KEGG" id="dre:114414"/>
<dbReference type="AGR" id="ZFIN:ZDB-GENE-010608-1"/>
<dbReference type="CTD" id="114414"/>
<dbReference type="ZFIN" id="ZDB-GENE-010608-1">
    <property type="gene designation" value="neurod6a"/>
</dbReference>
<dbReference type="eggNOG" id="KOG3898">
    <property type="taxonomic scope" value="Eukaryota"/>
</dbReference>
<dbReference type="HOGENOM" id="CLU_055134_1_0_1"/>
<dbReference type="InParanoid" id="Q6NYU3"/>
<dbReference type="OMA" id="FPYDFHL"/>
<dbReference type="OrthoDB" id="10039134at2759"/>
<dbReference type="PhylomeDB" id="Q6NYU3"/>
<dbReference type="PRO" id="PR:Q6NYU3"/>
<dbReference type="Proteomes" id="UP000000437">
    <property type="component" value="Chromosome 24"/>
</dbReference>
<dbReference type="Bgee" id="ENSDARG00000040008">
    <property type="expression patterns" value="Expressed in brain and 13 other cell types or tissues"/>
</dbReference>
<dbReference type="ExpressionAtlas" id="Q6NYU3">
    <property type="expression patterns" value="baseline and differential"/>
</dbReference>
<dbReference type="GO" id="GO:0005634">
    <property type="term" value="C:nucleus"/>
    <property type="evidence" value="ECO:0000318"/>
    <property type="project" value="GO_Central"/>
</dbReference>
<dbReference type="GO" id="GO:0000981">
    <property type="term" value="F:DNA-binding transcription factor activity, RNA polymerase II-specific"/>
    <property type="evidence" value="ECO:0000318"/>
    <property type="project" value="GO_Central"/>
</dbReference>
<dbReference type="GO" id="GO:0070888">
    <property type="term" value="F:E-box binding"/>
    <property type="evidence" value="ECO:0000318"/>
    <property type="project" value="GO_Central"/>
</dbReference>
<dbReference type="GO" id="GO:0046983">
    <property type="term" value="F:protein dimerization activity"/>
    <property type="evidence" value="ECO:0007669"/>
    <property type="project" value="InterPro"/>
</dbReference>
<dbReference type="GO" id="GO:0061564">
    <property type="term" value="P:axon development"/>
    <property type="evidence" value="ECO:0000318"/>
    <property type="project" value="GO_Central"/>
</dbReference>
<dbReference type="GO" id="GO:0050769">
    <property type="term" value="P:positive regulation of neurogenesis"/>
    <property type="evidence" value="ECO:0000315"/>
    <property type="project" value="ZFIN"/>
</dbReference>
<dbReference type="GO" id="GO:0045944">
    <property type="term" value="P:positive regulation of transcription by RNA polymerase II"/>
    <property type="evidence" value="ECO:0000318"/>
    <property type="project" value="GO_Central"/>
</dbReference>
<dbReference type="GO" id="GO:0007423">
    <property type="term" value="P:sensory organ development"/>
    <property type="evidence" value="ECO:0000318"/>
    <property type="project" value="GO_Central"/>
</dbReference>
<dbReference type="CDD" id="cd19722">
    <property type="entry name" value="bHLH_TS_NeuroD6_ATOH2"/>
    <property type="match status" value="1"/>
</dbReference>
<dbReference type="FunFam" id="4.10.280.10:FF:000006">
    <property type="entry name" value="Neurogenic differentiation factor"/>
    <property type="match status" value="1"/>
</dbReference>
<dbReference type="Gene3D" id="4.10.280.10">
    <property type="entry name" value="Helix-loop-helix DNA-binding domain"/>
    <property type="match status" value="1"/>
</dbReference>
<dbReference type="InterPro" id="IPR011598">
    <property type="entry name" value="bHLH_dom"/>
</dbReference>
<dbReference type="InterPro" id="IPR050359">
    <property type="entry name" value="bHLH_transcription_factors"/>
</dbReference>
<dbReference type="InterPro" id="IPR036638">
    <property type="entry name" value="HLH_DNA-bd_sf"/>
</dbReference>
<dbReference type="InterPro" id="IPR022575">
    <property type="entry name" value="NeuroD_DUF"/>
</dbReference>
<dbReference type="InterPro" id="IPR016637">
    <property type="entry name" value="TF_bHLH_NeuroD"/>
</dbReference>
<dbReference type="PANTHER" id="PTHR19290">
    <property type="entry name" value="BASIC HELIX-LOOP-HELIX PROTEIN NEUROGENIN-RELATED"/>
    <property type="match status" value="1"/>
</dbReference>
<dbReference type="PANTHER" id="PTHR19290:SF9">
    <property type="entry name" value="NEUROGENIC DIFFERENTIATION FACTOR 6"/>
    <property type="match status" value="1"/>
</dbReference>
<dbReference type="Pfam" id="PF00010">
    <property type="entry name" value="HLH"/>
    <property type="match status" value="1"/>
</dbReference>
<dbReference type="Pfam" id="PF12533">
    <property type="entry name" value="Neuro_bHLH"/>
    <property type="match status" value="1"/>
</dbReference>
<dbReference type="PIRSF" id="PIRSF015618">
    <property type="entry name" value="bHLH_NeuroD"/>
    <property type="match status" value="1"/>
</dbReference>
<dbReference type="SMART" id="SM00353">
    <property type="entry name" value="HLH"/>
    <property type="match status" value="1"/>
</dbReference>
<dbReference type="SUPFAM" id="SSF47459">
    <property type="entry name" value="HLH, helix-loop-helix DNA-binding domain"/>
    <property type="match status" value="1"/>
</dbReference>
<dbReference type="PROSITE" id="PS50888">
    <property type="entry name" value="BHLH"/>
    <property type="match status" value="1"/>
</dbReference>